<name>SP0A_GEOSE</name>
<feature type="chain" id="PRO_0000081233" description="Stage 0 sporulation protein A">
    <location>
        <begin position="1"/>
        <end position="259"/>
    </location>
</feature>
<feature type="domain" description="Response regulatory" evidence="3">
    <location>
        <begin position="4"/>
        <end position="121"/>
    </location>
</feature>
<feature type="DNA-binding region" description="H-T-H motif" evidence="2">
    <location>
        <begin position="191"/>
        <end position="210"/>
    </location>
</feature>
<feature type="binding site">
    <location>
        <position position="9"/>
    </location>
    <ligand>
        <name>Ca(2+)</name>
        <dbReference type="ChEBI" id="CHEBI:29108"/>
    </ligand>
</feature>
<feature type="binding site">
    <location>
        <position position="10"/>
    </location>
    <ligand>
        <name>Ca(2+)</name>
        <dbReference type="ChEBI" id="CHEBI:29108"/>
    </ligand>
</feature>
<feature type="binding site">
    <location>
        <position position="55"/>
    </location>
    <ligand>
        <name>Ca(2+)</name>
        <dbReference type="ChEBI" id="CHEBI:29108"/>
    </ligand>
</feature>
<feature type="modified residue" description="4-aspartylphosphate" evidence="3 4">
    <location>
        <position position="55"/>
    </location>
</feature>
<feature type="strand" evidence="5">
    <location>
        <begin position="3"/>
        <end position="8"/>
    </location>
</feature>
<feature type="helix" evidence="5">
    <location>
        <begin position="12"/>
        <end position="23"/>
    </location>
</feature>
<feature type="strand" evidence="5">
    <location>
        <begin position="28"/>
        <end position="36"/>
    </location>
</feature>
<feature type="helix" evidence="5">
    <location>
        <begin position="37"/>
        <end position="47"/>
    </location>
</feature>
<feature type="strand" evidence="5">
    <location>
        <begin position="50"/>
        <end position="56"/>
    </location>
</feature>
<feature type="strand" evidence="5">
    <location>
        <begin position="59"/>
        <end position="61"/>
    </location>
</feature>
<feature type="helix" evidence="5">
    <location>
        <begin position="63"/>
        <end position="73"/>
    </location>
</feature>
<feature type="strand" evidence="5">
    <location>
        <begin position="79"/>
        <end position="85"/>
    </location>
</feature>
<feature type="helix" evidence="5">
    <location>
        <begin position="89"/>
        <end position="97"/>
    </location>
</feature>
<feature type="strand" evidence="5">
    <location>
        <begin position="101"/>
        <end position="105"/>
    </location>
</feature>
<feature type="helix" evidence="5">
    <location>
        <begin position="113"/>
        <end position="122"/>
    </location>
</feature>
<feature type="helix" evidence="6">
    <location>
        <begin position="141"/>
        <end position="156"/>
    </location>
</feature>
<feature type="helix" evidence="6">
    <location>
        <begin position="163"/>
        <end position="177"/>
    </location>
</feature>
<feature type="helix" evidence="6">
    <location>
        <begin position="179"/>
        <end position="184"/>
    </location>
</feature>
<feature type="turn" evidence="6">
    <location>
        <begin position="185"/>
        <end position="188"/>
    </location>
</feature>
<feature type="helix" evidence="6">
    <location>
        <begin position="189"/>
        <end position="197"/>
    </location>
</feature>
<feature type="helix" evidence="6">
    <location>
        <begin position="201"/>
        <end position="217"/>
    </location>
</feature>
<feature type="turn" evidence="6">
    <location>
        <begin position="221"/>
        <end position="224"/>
    </location>
</feature>
<feature type="helix" evidence="6">
    <location>
        <begin position="225"/>
        <end position="228"/>
    </location>
</feature>
<feature type="helix" evidence="6">
    <location>
        <begin position="230"/>
        <end position="233"/>
    </location>
</feature>
<feature type="helix" evidence="6">
    <location>
        <begin position="241"/>
        <end position="254"/>
    </location>
</feature>
<sequence>MSIKVCIADDNRELVSLLDEYISSQPDMEVIGTAYNGQDCLQMLEEKRPDILLLDIIMPHLDGLAVLERIRAGFEHQPNVIMLTAFGQEDVTKKAVELGASYFILKPFDMENLAHHIRQVYGKTTPVVRKAAPAPQVRDNKPKNLDASITSIIHEIGVPAHIKGYLYLREAIAMVYHDIELLGSITKVLYPDIAKKYNTTASRVERAIRHAIEVAWSRGNLESISSLFGYTVSVSKAKPTNSEFIAMVADKLRLEHKAS</sequence>
<accession>P52934</accession>
<dbReference type="EMBL" id="AJ002297">
    <property type="protein sequence ID" value="CAA05307.1"/>
    <property type="molecule type" value="Genomic_DNA"/>
</dbReference>
<dbReference type="EMBL" id="U09977">
    <property type="protein sequence ID" value="AAA18878.1"/>
    <property type="molecule type" value="Unassigned_DNA"/>
</dbReference>
<dbReference type="PIR" id="S60875">
    <property type="entry name" value="S60875"/>
</dbReference>
<dbReference type="RefSeq" id="WP_033016446.1">
    <property type="nucleotide sequence ID" value="NZ_RCTK01000026.1"/>
</dbReference>
<dbReference type="PDB" id="1DZ3">
    <property type="method" value="X-ray"/>
    <property type="resolution" value="1.65 A"/>
    <property type="chains" value="A=1-130"/>
</dbReference>
<dbReference type="PDB" id="1FC3">
    <property type="method" value="X-ray"/>
    <property type="resolution" value="2.00 A"/>
    <property type="chains" value="A/B/C=140-259"/>
</dbReference>
<dbReference type="PDB" id="1QMP">
    <property type="method" value="X-ray"/>
    <property type="resolution" value="2.00 A"/>
    <property type="chains" value="A/B/C/D=1-130"/>
</dbReference>
<dbReference type="PDBsum" id="1DZ3"/>
<dbReference type="PDBsum" id="1FC3"/>
<dbReference type="PDBsum" id="1QMP"/>
<dbReference type="SMR" id="P52934"/>
<dbReference type="OrthoDB" id="9793299at2"/>
<dbReference type="EvolutionaryTrace" id="P52934"/>
<dbReference type="GO" id="GO:0005737">
    <property type="term" value="C:cytoplasm"/>
    <property type="evidence" value="ECO:0007669"/>
    <property type="project" value="UniProtKB-SubCell"/>
</dbReference>
<dbReference type="GO" id="GO:0005509">
    <property type="term" value="F:calcium ion binding"/>
    <property type="evidence" value="ECO:0007669"/>
    <property type="project" value="InterPro"/>
</dbReference>
<dbReference type="GO" id="GO:0003677">
    <property type="term" value="F:DNA binding"/>
    <property type="evidence" value="ECO:0007669"/>
    <property type="project" value="UniProtKB-KW"/>
</dbReference>
<dbReference type="GO" id="GO:0003700">
    <property type="term" value="F:DNA-binding transcription factor activity"/>
    <property type="evidence" value="ECO:0007669"/>
    <property type="project" value="InterPro"/>
</dbReference>
<dbReference type="GO" id="GO:0051606">
    <property type="term" value="P:detection of stimulus"/>
    <property type="evidence" value="ECO:0007669"/>
    <property type="project" value="InterPro"/>
</dbReference>
<dbReference type="GO" id="GO:0000160">
    <property type="term" value="P:phosphorelay signal transduction system"/>
    <property type="evidence" value="ECO:0007669"/>
    <property type="project" value="UniProtKB-KW"/>
</dbReference>
<dbReference type="GO" id="GO:0042173">
    <property type="term" value="P:regulation of sporulation resulting in formation of a cellular spore"/>
    <property type="evidence" value="ECO:0007669"/>
    <property type="project" value="InterPro"/>
</dbReference>
<dbReference type="GO" id="GO:0030435">
    <property type="term" value="P:sporulation resulting in formation of a cellular spore"/>
    <property type="evidence" value="ECO:0007669"/>
    <property type="project" value="UniProtKB-KW"/>
</dbReference>
<dbReference type="CDD" id="cd17561">
    <property type="entry name" value="REC_Spo0A"/>
    <property type="match status" value="1"/>
</dbReference>
<dbReference type="FunFam" id="1.10.10.10:FF:000107">
    <property type="entry name" value="Stage 0 sporulation protein A"/>
    <property type="match status" value="1"/>
</dbReference>
<dbReference type="Gene3D" id="3.40.50.2300">
    <property type="match status" value="1"/>
</dbReference>
<dbReference type="Gene3D" id="1.10.10.10">
    <property type="entry name" value="Winged helix-like DNA-binding domain superfamily/Winged helix DNA-binding domain"/>
    <property type="match status" value="1"/>
</dbReference>
<dbReference type="InterPro" id="IPR011006">
    <property type="entry name" value="CheY-like_superfamily"/>
</dbReference>
<dbReference type="InterPro" id="IPR016032">
    <property type="entry name" value="Sig_transdc_resp-reg_C-effctor"/>
</dbReference>
<dbReference type="InterPro" id="IPR001789">
    <property type="entry name" value="Sig_transdc_resp-reg_receiver"/>
</dbReference>
<dbReference type="InterPro" id="IPR014879">
    <property type="entry name" value="Spo0A_C"/>
</dbReference>
<dbReference type="InterPro" id="IPR012052">
    <property type="entry name" value="Spore_0_A"/>
</dbReference>
<dbReference type="InterPro" id="IPR052048">
    <property type="entry name" value="ST_Response_Regulator"/>
</dbReference>
<dbReference type="InterPro" id="IPR036388">
    <property type="entry name" value="WH-like_DNA-bd_sf"/>
</dbReference>
<dbReference type="NCBIfam" id="TIGR02875">
    <property type="entry name" value="spore_0_A"/>
    <property type="match status" value="1"/>
</dbReference>
<dbReference type="PANTHER" id="PTHR43228:SF5">
    <property type="entry name" value="STAGE 0 SPORULATION PROTEIN A"/>
    <property type="match status" value="1"/>
</dbReference>
<dbReference type="PANTHER" id="PTHR43228">
    <property type="entry name" value="TWO-COMPONENT RESPONSE REGULATOR"/>
    <property type="match status" value="1"/>
</dbReference>
<dbReference type="Pfam" id="PF00072">
    <property type="entry name" value="Response_reg"/>
    <property type="match status" value="1"/>
</dbReference>
<dbReference type="Pfam" id="PF08769">
    <property type="entry name" value="Spo0A_C"/>
    <property type="match status" value="1"/>
</dbReference>
<dbReference type="PIRSF" id="PIRSF002937">
    <property type="entry name" value="Res_reg_Spo0A"/>
    <property type="match status" value="1"/>
</dbReference>
<dbReference type="SMART" id="SM00448">
    <property type="entry name" value="REC"/>
    <property type="match status" value="1"/>
</dbReference>
<dbReference type="SUPFAM" id="SSF46894">
    <property type="entry name" value="C-terminal effector domain of the bipartite response regulators"/>
    <property type="match status" value="1"/>
</dbReference>
<dbReference type="SUPFAM" id="SSF52172">
    <property type="entry name" value="CheY-like"/>
    <property type="match status" value="1"/>
</dbReference>
<dbReference type="PROSITE" id="PS50110">
    <property type="entry name" value="RESPONSE_REGULATORY"/>
    <property type="match status" value="1"/>
</dbReference>
<gene>
    <name type="primary">spo0A</name>
</gene>
<reference key="1">
    <citation type="journal article" date="1999" name="Acta Crystallogr. D">
        <title>Crystallization of the regulatory and effector domains of the key sporulation response regulator Spo0A.</title>
        <authorList>
            <person name="Muchova K."/>
            <person name="Lewis R.J."/>
            <person name="Brannigan J.A."/>
            <person name="Offen W.A."/>
            <person name="Brown D.P."/>
            <person name="Barak I."/>
            <person name="Youngman P."/>
            <person name="Wilkinson A.J."/>
        </authorList>
    </citation>
    <scope>NUCLEOTIDE SEQUENCE [GENOMIC DNA]</scope>
    <scope>CRYSTALLIZATION</scope>
    <source>
        <strain>B4419</strain>
    </source>
</reference>
<reference key="2">
    <citation type="journal article" date="1994" name="Mol. Microbiol.">
        <title>Characterization of spo0A homologues in diverse Bacillus and Clostridium species identifies a probable DNA-binding domain.</title>
        <authorList>
            <person name="Brown D.P."/>
            <person name="Ganova-Raeva L."/>
            <person name="Green B.D."/>
            <person name="Wilkinson S.R."/>
            <person name="Young M."/>
            <person name="Youngman P."/>
        </authorList>
    </citation>
    <scope>NUCLEOTIDE SEQUENCE [GENOMIC DNA] OF 64-209</scope>
    <source>
        <strain>B4419</strain>
    </source>
</reference>
<reference key="3">
    <citation type="journal article" date="1999" name="J. Mol. Biol.">
        <title>Phosphorylated aspartate in the structure of a response regulator protein.</title>
        <authorList>
            <person name="Lewis R.J."/>
            <person name="Brannigan J.A."/>
            <person name="Muchova K."/>
            <person name="Barak I."/>
            <person name="Wilkinson A.J."/>
        </authorList>
    </citation>
    <scope>X-RAY CRYSTALLOGRAPHY (2.0 ANGSTROMS) OF 1-130</scope>
    <scope>PHOSPHORYLATION AT ASP-55</scope>
</reference>
<reference key="4">
    <citation type="journal article" date="2000" name="J. Mol. Biol.">
        <title>Domain swapping in the sporulation response regulator Spo0A.</title>
        <authorList>
            <person name="Lewis R.J."/>
            <person name="Muchova K."/>
            <person name="Brannigan J.A."/>
            <person name="Barak I."/>
            <person name="Leonard G."/>
            <person name="Wilkinson A.J."/>
        </authorList>
    </citation>
    <scope>X-RAY CRYSTALLOGRAPHY (1.65 ANGSTROMS) OF 1-130</scope>
</reference>
<comment type="function">
    <text evidence="1">May play the central regulatory role in sporulation. It may be an element of the effector pathway responsible for the activation of sporulation genes in response to nutritional stress. Spo0A may act in concert with Spo0H (a sigma factor) to control the expression of some genes that are critical to the sporulation process. Repressor of abrB, activator of the spoIIa operon. Binds the DNA sequence 5'-TGNCGAA-3' (0A box) (By similarity).</text>
</comment>
<comment type="cofactor">
    <cofactor>
        <name>Ca(2+)</name>
        <dbReference type="ChEBI" id="CHEBI:29108"/>
    </cofactor>
    <text>Binds 1 Ca(2+) ion per subunit.</text>
</comment>
<comment type="subcellular location">
    <subcellularLocation>
        <location>Cytoplasm</location>
    </subcellularLocation>
</comment>
<comment type="PTM">
    <text evidence="1">Phosphorylated by KinA and KinB.</text>
</comment>
<keyword id="KW-0002">3D-structure</keyword>
<keyword id="KW-0010">Activator</keyword>
<keyword id="KW-0106">Calcium</keyword>
<keyword id="KW-0963">Cytoplasm</keyword>
<keyword id="KW-0238">DNA-binding</keyword>
<keyword id="KW-0479">Metal-binding</keyword>
<keyword id="KW-0597">Phosphoprotein</keyword>
<keyword id="KW-0678">Repressor</keyword>
<keyword id="KW-0749">Sporulation</keyword>
<keyword id="KW-0804">Transcription</keyword>
<keyword id="KW-0805">Transcription regulation</keyword>
<keyword id="KW-0902">Two-component regulatory system</keyword>
<organism>
    <name type="scientific">Geobacillus stearothermophilus</name>
    <name type="common">Bacillus stearothermophilus</name>
    <dbReference type="NCBI Taxonomy" id="1422"/>
    <lineage>
        <taxon>Bacteria</taxon>
        <taxon>Bacillati</taxon>
        <taxon>Bacillota</taxon>
        <taxon>Bacilli</taxon>
        <taxon>Bacillales</taxon>
        <taxon>Anoxybacillaceae</taxon>
        <taxon>Geobacillus</taxon>
    </lineage>
</organism>
<evidence type="ECO:0000250" key="1"/>
<evidence type="ECO:0000255" key="2"/>
<evidence type="ECO:0000255" key="3">
    <source>
        <dbReference type="PROSITE-ProRule" id="PRU00169"/>
    </source>
</evidence>
<evidence type="ECO:0000269" key="4">
    <source>
    </source>
</evidence>
<evidence type="ECO:0007829" key="5">
    <source>
        <dbReference type="PDB" id="1DZ3"/>
    </source>
</evidence>
<evidence type="ECO:0007829" key="6">
    <source>
        <dbReference type="PDB" id="1FC3"/>
    </source>
</evidence>
<protein>
    <recommendedName>
        <fullName>Stage 0 sporulation protein A</fullName>
    </recommendedName>
</protein>
<proteinExistence type="evidence at protein level"/>